<organism>
    <name type="scientific">Shigella sonnei (strain Ss046)</name>
    <dbReference type="NCBI Taxonomy" id="300269"/>
    <lineage>
        <taxon>Bacteria</taxon>
        <taxon>Pseudomonadati</taxon>
        <taxon>Pseudomonadota</taxon>
        <taxon>Gammaproteobacteria</taxon>
        <taxon>Enterobacterales</taxon>
        <taxon>Enterobacteriaceae</taxon>
        <taxon>Shigella</taxon>
    </lineage>
</organism>
<evidence type="ECO:0000255" key="1">
    <source>
        <dbReference type="HAMAP-Rule" id="MF_01315"/>
    </source>
</evidence>
<evidence type="ECO:0000256" key="2">
    <source>
        <dbReference type="SAM" id="MobiDB-lite"/>
    </source>
</evidence>
<evidence type="ECO:0000305" key="3"/>
<proteinExistence type="inferred from homology"/>
<keyword id="KW-1185">Reference proteome</keyword>
<keyword id="KW-0687">Ribonucleoprotein</keyword>
<keyword id="KW-0689">Ribosomal protein</keyword>
<keyword id="KW-0694">RNA-binding</keyword>
<keyword id="KW-0699">rRNA-binding</keyword>
<keyword id="KW-0820">tRNA-binding</keyword>
<dbReference type="EMBL" id="CP000038">
    <property type="protein sequence ID" value="AAZ90001.1"/>
    <property type="molecule type" value="Genomic_DNA"/>
</dbReference>
<dbReference type="RefSeq" id="WP_000090775.1">
    <property type="nucleotide sequence ID" value="NC_007384.1"/>
</dbReference>
<dbReference type="SMR" id="Q3YWW1"/>
<dbReference type="GeneID" id="93778689"/>
<dbReference type="KEGG" id="ssn:SSON_3439"/>
<dbReference type="HOGENOM" id="CLU_103849_1_2_6"/>
<dbReference type="Proteomes" id="UP000002529">
    <property type="component" value="Chromosome"/>
</dbReference>
<dbReference type="GO" id="GO:0005829">
    <property type="term" value="C:cytosol"/>
    <property type="evidence" value="ECO:0007669"/>
    <property type="project" value="TreeGrafter"/>
</dbReference>
<dbReference type="GO" id="GO:0015935">
    <property type="term" value="C:small ribosomal subunit"/>
    <property type="evidence" value="ECO:0007669"/>
    <property type="project" value="TreeGrafter"/>
</dbReference>
<dbReference type="GO" id="GO:0019843">
    <property type="term" value="F:rRNA binding"/>
    <property type="evidence" value="ECO:0007669"/>
    <property type="project" value="UniProtKB-UniRule"/>
</dbReference>
<dbReference type="GO" id="GO:0003735">
    <property type="term" value="F:structural constituent of ribosome"/>
    <property type="evidence" value="ECO:0007669"/>
    <property type="project" value="InterPro"/>
</dbReference>
<dbReference type="GO" id="GO:0000049">
    <property type="term" value="F:tRNA binding"/>
    <property type="evidence" value="ECO:0007669"/>
    <property type="project" value="UniProtKB-UniRule"/>
</dbReference>
<dbReference type="GO" id="GO:0006412">
    <property type="term" value="P:translation"/>
    <property type="evidence" value="ECO:0007669"/>
    <property type="project" value="UniProtKB-UniRule"/>
</dbReference>
<dbReference type="FunFam" id="1.10.8.50:FF:000001">
    <property type="entry name" value="30S ribosomal protein S13"/>
    <property type="match status" value="1"/>
</dbReference>
<dbReference type="FunFam" id="4.10.910.10:FF:000001">
    <property type="entry name" value="30S ribosomal protein S13"/>
    <property type="match status" value="1"/>
</dbReference>
<dbReference type="Gene3D" id="1.10.8.50">
    <property type="match status" value="1"/>
</dbReference>
<dbReference type="Gene3D" id="4.10.910.10">
    <property type="entry name" value="30s ribosomal protein s13, domain 2"/>
    <property type="match status" value="1"/>
</dbReference>
<dbReference type="HAMAP" id="MF_01315">
    <property type="entry name" value="Ribosomal_uS13"/>
    <property type="match status" value="1"/>
</dbReference>
<dbReference type="InterPro" id="IPR027437">
    <property type="entry name" value="Rbsml_uS13_C"/>
</dbReference>
<dbReference type="InterPro" id="IPR001892">
    <property type="entry name" value="Ribosomal_uS13"/>
</dbReference>
<dbReference type="InterPro" id="IPR010979">
    <property type="entry name" value="Ribosomal_uS13-like_H2TH"/>
</dbReference>
<dbReference type="InterPro" id="IPR019980">
    <property type="entry name" value="Ribosomal_uS13_bac-type"/>
</dbReference>
<dbReference type="InterPro" id="IPR018269">
    <property type="entry name" value="Ribosomal_uS13_CS"/>
</dbReference>
<dbReference type="NCBIfam" id="TIGR03631">
    <property type="entry name" value="uS13_bact"/>
    <property type="match status" value="1"/>
</dbReference>
<dbReference type="PANTHER" id="PTHR10871">
    <property type="entry name" value="30S RIBOSOMAL PROTEIN S13/40S RIBOSOMAL PROTEIN S18"/>
    <property type="match status" value="1"/>
</dbReference>
<dbReference type="PANTHER" id="PTHR10871:SF1">
    <property type="entry name" value="SMALL RIBOSOMAL SUBUNIT PROTEIN US13M"/>
    <property type="match status" value="1"/>
</dbReference>
<dbReference type="Pfam" id="PF00416">
    <property type="entry name" value="Ribosomal_S13"/>
    <property type="match status" value="1"/>
</dbReference>
<dbReference type="PIRSF" id="PIRSF002134">
    <property type="entry name" value="Ribosomal_S13"/>
    <property type="match status" value="1"/>
</dbReference>
<dbReference type="SUPFAM" id="SSF46946">
    <property type="entry name" value="S13-like H2TH domain"/>
    <property type="match status" value="1"/>
</dbReference>
<dbReference type="PROSITE" id="PS00646">
    <property type="entry name" value="RIBOSOMAL_S13_1"/>
    <property type="match status" value="1"/>
</dbReference>
<dbReference type="PROSITE" id="PS50159">
    <property type="entry name" value="RIBOSOMAL_S13_2"/>
    <property type="match status" value="1"/>
</dbReference>
<comment type="function">
    <text evidence="1">Located at the top of the head of the 30S subunit, it contacts several helices of the 16S rRNA. In the 70S ribosome it contacts the 23S rRNA (bridge B1a) and protein L5 of the 50S subunit (bridge B1b), connecting the 2 subunits; these bridges are implicated in subunit movement. Contacts the tRNAs in the A and P-sites.</text>
</comment>
<comment type="subunit">
    <text evidence="1">Part of the 30S ribosomal subunit. Forms a loose heterodimer with protein S19. Forms two bridges to the 50S subunit in the 70S ribosome.</text>
</comment>
<comment type="similarity">
    <text evidence="1">Belongs to the universal ribosomal protein uS13 family.</text>
</comment>
<reference key="1">
    <citation type="journal article" date="2005" name="Nucleic Acids Res.">
        <title>Genome dynamics and diversity of Shigella species, the etiologic agents of bacillary dysentery.</title>
        <authorList>
            <person name="Yang F."/>
            <person name="Yang J."/>
            <person name="Zhang X."/>
            <person name="Chen L."/>
            <person name="Jiang Y."/>
            <person name="Yan Y."/>
            <person name="Tang X."/>
            <person name="Wang J."/>
            <person name="Xiong Z."/>
            <person name="Dong J."/>
            <person name="Xue Y."/>
            <person name="Zhu Y."/>
            <person name="Xu X."/>
            <person name="Sun L."/>
            <person name="Chen S."/>
            <person name="Nie H."/>
            <person name="Peng J."/>
            <person name="Xu J."/>
            <person name="Wang Y."/>
            <person name="Yuan Z."/>
            <person name="Wen Y."/>
            <person name="Yao Z."/>
            <person name="Shen Y."/>
            <person name="Qiang B."/>
            <person name="Hou Y."/>
            <person name="Yu J."/>
            <person name="Jin Q."/>
        </authorList>
    </citation>
    <scope>NUCLEOTIDE SEQUENCE [LARGE SCALE GENOMIC DNA]</scope>
    <source>
        <strain>Ss046</strain>
    </source>
</reference>
<protein>
    <recommendedName>
        <fullName evidence="1">Small ribosomal subunit protein uS13</fullName>
    </recommendedName>
    <alternativeName>
        <fullName evidence="3">30S ribosomal protein S13</fullName>
    </alternativeName>
</protein>
<gene>
    <name evidence="1" type="primary">rpsM</name>
    <name type="ordered locus">SSON_3439</name>
</gene>
<feature type="chain" id="PRO_0000230565" description="Small ribosomal subunit protein uS13">
    <location>
        <begin position="1"/>
        <end position="118"/>
    </location>
</feature>
<feature type="region of interest" description="Disordered" evidence="2">
    <location>
        <begin position="94"/>
        <end position="118"/>
    </location>
</feature>
<name>RS13_SHISS</name>
<accession>Q3YWW1</accession>
<sequence length="118" mass="13099">MARIAGINIPDHKHAVIALTSIYGVGKTRSKAILAAAGIAEDVKISELSEGQIDTLRDEVAKFVVEGDLRREISMSIKRLMDLGCYRGLRHRRGLPVRGQRTKTNARTRKGPRKPIKK</sequence>